<accession>O34423</accession>
<organism>
    <name type="scientific">Bacillus subtilis (strain 168)</name>
    <dbReference type="NCBI Taxonomy" id="224308"/>
    <lineage>
        <taxon>Bacteria</taxon>
        <taxon>Bacillati</taxon>
        <taxon>Bacillota</taxon>
        <taxon>Bacilli</taxon>
        <taxon>Bacillales</taxon>
        <taxon>Bacillaceae</taxon>
        <taxon>Bacillus</taxon>
    </lineage>
</organism>
<dbReference type="EMBL" id="AF034138">
    <property type="protein sequence ID" value="AAB87517.1"/>
    <property type="molecule type" value="Genomic_DNA"/>
</dbReference>
<dbReference type="EMBL" id="AL009126">
    <property type="protein sequence ID" value="CAB13106.2"/>
    <property type="molecule type" value="Genomic_DNA"/>
</dbReference>
<dbReference type="PIR" id="C69854">
    <property type="entry name" value="C69854"/>
</dbReference>
<dbReference type="RefSeq" id="WP_003245071.1">
    <property type="nucleotide sequence ID" value="NZ_OZ025638.1"/>
</dbReference>
<dbReference type="SMR" id="O34423"/>
<dbReference type="FunCoup" id="O34423">
    <property type="interactions" value="6"/>
</dbReference>
<dbReference type="STRING" id="224308.BSU12490"/>
<dbReference type="PaxDb" id="224308-BSU12490"/>
<dbReference type="EnsemblBacteria" id="CAB13106">
    <property type="protein sequence ID" value="CAB13106"/>
    <property type="gene ID" value="BSU_12490"/>
</dbReference>
<dbReference type="GeneID" id="939414"/>
<dbReference type="KEGG" id="bsu:BSU12490"/>
<dbReference type="PATRIC" id="fig|224308.179.peg.1350"/>
<dbReference type="eggNOG" id="COG3546">
    <property type="taxonomic scope" value="Bacteria"/>
</dbReference>
<dbReference type="InParanoid" id="O34423"/>
<dbReference type="OrthoDB" id="9800585at2"/>
<dbReference type="PhylomeDB" id="O34423"/>
<dbReference type="BioCyc" id="BSUB:BSU12490-MONOMER"/>
<dbReference type="Proteomes" id="UP000001570">
    <property type="component" value="Chromosome"/>
</dbReference>
<dbReference type="CDD" id="cd01051">
    <property type="entry name" value="Mn_catalase"/>
    <property type="match status" value="1"/>
</dbReference>
<dbReference type="Gene3D" id="1.20.1260.10">
    <property type="match status" value="1"/>
</dbReference>
<dbReference type="Gene3D" id="3.30.1530.10">
    <property type="entry name" value="manganese catalase, domain 2, chain A"/>
    <property type="match status" value="1"/>
</dbReference>
<dbReference type="InterPro" id="IPR012347">
    <property type="entry name" value="Ferritin-like"/>
</dbReference>
<dbReference type="InterPro" id="IPR009078">
    <property type="entry name" value="Ferritin-like_SF"/>
</dbReference>
<dbReference type="InterPro" id="IPR007760">
    <property type="entry name" value="Mn_catalase"/>
</dbReference>
<dbReference type="InterPro" id="IPR027407">
    <property type="entry name" value="Mn_catalase_C"/>
</dbReference>
<dbReference type="InterPro" id="IPR039377">
    <property type="entry name" value="Mn_catalase_dom"/>
</dbReference>
<dbReference type="Pfam" id="PF05067">
    <property type="entry name" value="Mn_catalase"/>
    <property type="match status" value="1"/>
</dbReference>
<dbReference type="SUPFAM" id="SSF47240">
    <property type="entry name" value="Ferritin-like"/>
    <property type="match status" value="1"/>
</dbReference>
<gene>
    <name type="primary">yjqC</name>
    <name type="ordered locus">BSU12490</name>
</gene>
<feature type="chain" id="PRO_0000096158" description="Uncharacterized protein YjqC">
    <location>
        <begin position="1"/>
        <end position="278"/>
    </location>
</feature>
<feature type="sequence conflict" description="In Ref. 1; AAB87517." evidence="1" ref="1">
    <original>P</original>
    <variation>S</variation>
    <location>
        <position position="14"/>
    </location>
</feature>
<proteinExistence type="inferred from homology"/>
<protein>
    <recommendedName>
        <fullName>Uncharacterized protein YjqC</fullName>
    </recommendedName>
</protein>
<evidence type="ECO:0000305" key="1"/>
<keyword id="KW-1185">Reference proteome</keyword>
<comment type="similarity">
    <text evidence="1">Belongs to the manganese catalase family.</text>
</comment>
<sequence>MFYHIKELQYQAKPAHPDPVYAKKLQEVLGGQFGEISVMMQYLFQGFNCRADAKYKDLLYDVGTEEIGHVEMLATMISRLLDNAPADVQEDAYKSNPAIAAVMSGMNPQHAIVSGLGAMASDSEGYPWNAKYIISSGNLLADFRANLNAEAQGRLQVTRLYAMTDDPGVRDMLSFLIARDTYHQNMWYAAIKELEERERDIVVPTTFPRELEKQEVSYDLFNFSRGDESSQGRWAHGEAFDGRGEFRYIPAPIAFASAPHLKPAPMWLHNTVPPMSKC</sequence>
<reference key="1">
    <citation type="submission" date="1997-11" db="EMBL/GenBank/DDBJ databases">
        <title>Sequencing and characterisation of the region comprising XlyB, the second lytic enzyme of the defective prophage PBSX of Bacillus subtilis.</title>
        <authorList>
            <person name="da Silva E."/>
            <person name="Karamata D."/>
        </authorList>
    </citation>
    <scope>NUCLEOTIDE SEQUENCE [GENOMIC DNA]</scope>
    <source>
        <strain>168</strain>
    </source>
</reference>
<reference key="2">
    <citation type="journal article" date="1997" name="Nature">
        <title>The complete genome sequence of the Gram-positive bacterium Bacillus subtilis.</title>
        <authorList>
            <person name="Kunst F."/>
            <person name="Ogasawara N."/>
            <person name="Moszer I."/>
            <person name="Albertini A.M."/>
            <person name="Alloni G."/>
            <person name="Azevedo V."/>
            <person name="Bertero M.G."/>
            <person name="Bessieres P."/>
            <person name="Bolotin A."/>
            <person name="Borchert S."/>
            <person name="Borriss R."/>
            <person name="Boursier L."/>
            <person name="Brans A."/>
            <person name="Braun M."/>
            <person name="Brignell S.C."/>
            <person name="Bron S."/>
            <person name="Brouillet S."/>
            <person name="Bruschi C.V."/>
            <person name="Caldwell B."/>
            <person name="Capuano V."/>
            <person name="Carter N.M."/>
            <person name="Choi S.-K."/>
            <person name="Codani J.-J."/>
            <person name="Connerton I.F."/>
            <person name="Cummings N.J."/>
            <person name="Daniel R.A."/>
            <person name="Denizot F."/>
            <person name="Devine K.M."/>
            <person name="Duesterhoeft A."/>
            <person name="Ehrlich S.D."/>
            <person name="Emmerson P.T."/>
            <person name="Entian K.-D."/>
            <person name="Errington J."/>
            <person name="Fabret C."/>
            <person name="Ferrari E."/>
            <person name="Foulger D."/>
            <person name="Fritz C."/>
            <person name="Fujita M."/>
            <person name="Fujita Y."/>
            <person name="Fuma S."/>
            <person name="Galizzi A."/>
            <person name="Galleron N."/>
            <person name="Ghim S.-Y."/>
            <person name="Glaser P."/>
            <person name="Goffeau A."/>
            <person name="Golightly E.J."/>
            <person name="Grandi G."/>
            <person name="Guiseppi G."/>
            <person name="Guy B.J."/>
            <person name="Haga K."/>
            <person name="Haiech J."/>
            <person name="Harwood C.R."/>
            <person name="Henaut A."/>
            <person name="Hilbert H."/>
            <person name="Holsappel S."/>
            <person name="Hosono S."/>
            <person name="Hullo M.-F."/>
            <person name="Itaya M."/>
            <person name="Jones L.-M."/>
            <person name="Joris B."/>
            <person name="Karamata D."/>
            <person name="Kasahara Y."/>
            <person name="Klaerr-Blanchard M."/>
            <person name="Klein C."/>
            <person name="Kobayashi Y."/>
            <person name="Koetter P."/>
            <person name="Koningstein G."/>
            <person name="Krogh S."/>
            <person name="Kumano M."/>
            <person name="Kurita K."/>
            <person name="Lapidus A."/>
            <person name="Lardinois S."/>
            <person name="Lauber J."/>
            <person name="Lazarevic V."/>
            <person name="Lee S.-M."/>
            <person name="Levine A."/>
            <person name="Liu H."/>
            <person name="Masuda S."/>
            <person name="Mauel C."/>
            <person name="Medigue C."/>
            <person name="Medina N."/>
            <person name="Mellado R.P."/>
            <person name="Mizuno M."/>
            <person name="Moestl D."/>
            <person name="Nakai S."/>
            <person name="Noback M."/>
            <person name="Noone D."/>
            <person name="O'Reilly M."/>
            <person name="Ogawa K."/>
            <person name="Ogiwara A."/>
            <person name="Oudega B."/>
            <person name="Park S.-H."/>
            <person name="Parro V."/>
            <person name="Pohl T.M."/>
            <person name="Portetelle D."/>
            <person name="Porwollik S."/>
            <person name="Prescott A.M."/>
            <person name="Presecan E."/>
            <person name="Pujic P."/>
            <person name="Purnelle B."/>
            <person name="Rapoport G."/>
            <person name="Rey M."/>
            <person name="Reynolds S."/>
            <person name="Rieger M."/>
            <person name="Rivolta C."/>
            <person name="Rocha E."/>
            <person name="Roche B."/>
            <person name="Rose M."/>
            <person name="Sadaie Y."/>
            <person name="Sato T."/>
            <person name="Scanlan E."/>
            <person name="Schleich S."/>
            <person name="Schroeter R."/>
            <person name="Scoffone F."/>
            <person name="Sekiguchi J."/>
            <person name="Sekowska A."/>
            <person name="Seror S.J."/>
            <person name="Serror P."/>
            <person name="Shin B.-S."/>
            <person name="Soldo B."/>
            <person name="Sorokin A."/>
            <person name="Tacconi E."/>
            <person name="Takagi T."/>
            <person name="Takahashi H."/>
            <person name="Takemaru K."/>
            <person name="Takeuchi M."/>
            <person name="Tamakoshi A."/>
            <person name="Tanaka T."/>
            <person name="Terpstra P."/>
            <person name="Tognoni A."/>
            <person name="Tosato V."/>
            <person name="Uchiyama S."/>
            <person name="Vandenbol M."/>
            <person name="Vannier F."/>
            <person name="Vassarotti A."/>
            <person name="Viari A."/>
            <person name="Wambutt R."/>
            <person name="Wedler E."/>
            <person name="Wedler H."/>
            <person name="Weitzenegger T."/>
            <person name="Winters P."/>
            <person name="Wipat A."/>
            <person name="Yamamoto H."/>
            <person name="Yamane K."/>
            <person name="Yasumoto K."/>
            <person name="Yata K."/>
            <person name="Yoshida K."/>
            <person name="Yoshikawa H.-F."/>
            <person name="Zumstein E."/>
            <person name="Yoshikawa H."/>
            <person name="Danchin A."/>
        </authorList>
    </citation>
    <scope>NUCLEOTIDE SEQUENCE [LARGE SCALE GENOMIC DNA]</scope>
    <source>
        <strain>168</strain>
    </source>
</reference>
<reference key="3">
    <citation type="journal article" date="2009" name="Microbiology">
        <title>From a consortium sequence to a unified sequence: the Bacillus subtilis 168 reference genome a decade later.</title>
        <authorList>
            <person name="Barbe V."/>
            <person name="Cruveiller S."/>
            <person name="Kunst F."/>
            <person name="Lenoble P."/>
            <person name="Meurice G."/>
            <person name="Sekowska A."/>
            <person name="Vallenet D."/>
            <person name="Wang T."/>
            <person name="Moszer I."/>
            <person name="Medigue C."/>
            <person name="Danchin A."/>
        </authorList>
    </citation>
    <scope>SEQUENCE REVISION TO 14</scope>
</reference>
<name>YJQC_BACSU</name>